<gene>
    <name type="ORF">DDB_G0286605</name>
</gene>
<proteinExistence type="evidence at transcript level"/>
<accession>Q54LJ8</accession>
<sequence length="302" mass="34363">MSKKVLVFGGTGYQGGSVVRELLKDDSFKVITLSRNPESEKCKELKKLGADVIKCDESQPKEEIEKVMKGCDCVYLVTNSQGYCEKEIEYGIKVADVALKCGVKHFIFSTVPGPNKLSNGKFKSPDLDNKVEIEQHIRQLSKSNPEFISSFVIAPWYFQNFINYYQPEKESSTSDKYILKWACDPKVSLDYGDIDELGLLVREIFKNPIKFSGETVPFSSEILTPIQIVEIISKVTNKKVSYQFIDPVEYGKSYDLEVSLMLAFFNEYGGFNIYGGDRSIAHNIKKLTSFEEYLKKINYKLD</sequence>
<protein>
    <recommendedName>
        <fullName>NmrA-like family domain-containing protein DDB_G0286605</fullName>
    </recommendedName>
</protein>
<evidence type="ECO:0000250" key="1"/>
<evidence type="ECO:0000269" key="2">
    <source>
    </source>
</evidence>
<evidence type="ECO:0000305" key="3"/>
<name>NMRL1_DICDI</name>
<keyword id="KW-0521">NADP</keyword>
<keyword id="KW-1185">Reference proteome</keyword>
<feature type="chain" id="PRO_0000393567" description="NmrA-like family domain-containing protein DDB_G0286605">
    <location>
        <begin position="1"/>
        <end position="302"/>
    </location>
</feature>
<feature type="binding site" evidence="1">
    <location>
        <begin position="9"/>
        <end position="14"/>
    </location>
    <ligand>
        <name>NADP(+)</name>
        <dbReference type="ChEBI" id="CHEBI:58349"/>
    </ligand>
</feature>
<feature type="binding site" evidence="1">
    <location>
        <begin position="35"/>
        <end position="39"/>
    </location>
    <ligand>
        <name>NADP(+)</name>
        <dbReference type="ChEBI" id="CHEBI:58349"/>
    </ligand>
</feature>
<feature type="binding site" evidence="1">
    <location>
        <begin position="56"/>
        <end position="57"/>
    </location>
    <ligand>
        <name>NADP(+)</name>
        <dbReference type="ChEBI" id="CHEBI:58349"/>
    </ligand>
</feature>
<feature type="binding site" evidence="1">
    <location>
        <begin position="78"/>
        <end position="80"/>
    </location>
    <ligand>
        <name>NADP(+)</name>
        <dbReference type="ChEBI" id="CHEBI:58349"/>
    </ligand>
</feature>
<feature type="binding site" evidence="1">
    <location>
        <position position="130"/>
    </location>
    <ligand>
        <name>NADP(+)</name>
        <dbReference type="ChEBI" id="CHEBI:58349"/>
    </ligand>
</feature>
<feature type="binding site" evidence="1">
    <location>
        <begin position="157"/>
        <end position="160"/>
    </location>
    <ligand>
        <name>NADP(+)</name>
        <dbReference type="ChEBI" id="CHEBI:58349"/>
    </ligand>
</feature>
<reference key="1">
    <citation type="journal article" date="2005" name="Nature">
        <title>The genome of the social amoeba Dictyostelium discoideum.</title>
        <authorList>
            <person name="Eichinger L."/>
            <person name="Pachebat J.A."/>
            <person name="Gloeckner G."/>
            <person name="Rajandream M.A."/>
            <person name="Sucgang R."/>
            <person name="Berriman M."/>
            <person name="Song J."/>
            <person name="Olsen R."/>
            <person name="Szafranski K."/>
            <person name="Xu Q."/>
            <person name="Tunggal B."/>
            <person name="Kummerfeld S."/>
            <person name="Madera M."/>
            <person name="Konfortov B.A."/>
            <person name="Rivero F."/>
            <person name="Bankier A.T."/>
            <person name="Lehmann R."/>
            <person name="Hamlin N."/>
            <person name="Davies R."/>
            <person name="Gaudet P."/>
            <person name="Fey P."/>
            <person name="Pilcher K."/>
            <person name="Chen G."/>
            <person name="Saunders D."/>
            <person name="Sodergren E.J."/>
            <person name="Davis P."/>
            <person name="Kerhornou A."/>
            <person name="Nie X."/>
            <person name="Hall N."/>
            <person name="Anjard C."/>
            <person name="Hemphill L."/>
            <person name="Bason N."/>
            <person name="Farbrother P."/>
            <person name="Desany B."/>
            <person name="Just E."/>
            <person name="Morio T."/>
            <person name="Rost R."/>
            <person name="Churcher C.M."/>
            <person name="Cooper J."/>
            <person name="Haydock S."/>
            <person name="van Driessche N."/>
            <person name="Cronin A."/>
            <person name="Goodhead I."/>
            <person name="Muzny D.M."/>
            <person name="Mourier T."/>
            <person name="Pain A."/>
            <person name="Lu M."/>
            <person name="Harper D."/>
            <person name="Lindsay R."/>
            <person name="Hauser H."/>
            <person name="James K.D."/>
            <person name="Quiles M."/>
            <person name="Madan Babu M."/>
            <person name="Saito T."/>
            <person name="Buchrieser C."/>
            <person name="Wardroper A."/>
            <person name="Felder M."/>
            <person name="Thangavelu M."/>
            <person name="Johnson D."/>
            <person name="Knights A."/>
            <person name="Loulseged H."/>
            <person name="Mungall K.L."/>
            <person name="Oliver K."/>
            <person name="Price C."/>
            <person name="Quail M.A."/>
            <person name="Urushihara H."/>
            <person name="Hernandez J."/>
            <person name="Rabbinowitsch E."/>
            <person name="Steffen D."/>
            <person name="Sanders M."/>
            <person name="Ma J."/>
            <person name="Kohara Y."/>
            <person name="Sharp S."/>
            <person name="Simmonds M.N."/>
            <person name="Spiegler S."/>
            <person name="Tivey A."/>
            <person name="Sugano S."/>
            <person name="White B."/>
            <person name="Walker D."/>
            <person name="Woodward J.R."/>
            <person name="Winckler T."/>
            <person name="Tanaka Y."/>
            <person name="Shaulsky G."/>
            <person name="Schleicher M."/>
            <person name="Weinstock G.M."/>
            <person name="Rosenthal A."/>
            <person name="Cox E.C."/>
            <person name="Chisholm R.L."/>
            <person name="Gibbs R.A."/>
            <person name="Loomis W.F."/>
            <person name="Platzer M."/>
            <person name="Kay R.R."/>
            <person name="Williams J.G."/>
            <person name="Dear P.H."/>
            <person name="Noegel A.A."/>
            <person name="Barrell B.G."/>
            <person name="Kuspa A."/>
        </authorList>
    </citation>
    <scope>NUCLEOTIDE SEQUENCE [LARGE SCALE GENOMIC DNA]</scope>
    <source>
        <strain>AX4</strain>
    </source>
</reference>
<reference key="2">
    <citation type="journal article" date="2004" name="Eukaryot. Cell">
        <title>Control of cell type proportioning in Dictyostelium discoideum by differentiation-inducing factor as determined by in situ hybridization.</title>
        <authorList>
            <person name="Maruo T."/>
            <person name="Sakamoto H."/>
            <person name="Iranfar N."/>
            <person name="Fuller D."/>
            <person name="Morio T."/>
            <person name="Urushihara H."/>
            <person name="Tanaka Y."/>
            <person name="Maeda M."/>
            <person name="Loomis W.F."/>
        </authorList>
    </citation>
    <scope>DEVELOPMENTAL STAGE [LARGE SCALE ANALYSIS]</scope>
</reference>
<comment type="function">
    <text evidence="1">May be a redox sensor protein.</text>
</comment>
<comment type="developmental stage">
    <text evidence="2">Expressed in prespore cells.</text>
</comment>
<comment type="similarity">
    <text evidence="3">Belongs to the NmrA-type oxidoreductase family.</text>
</comment>
<comment type="caution">
    <text evidence="3">Lacks the conserved Tyr residue in the active site triad of Ser-Tyr-Lys necessary for dehydrogenase activity, suggesting that it has no oxidoreductase activity.</text>
</comment>
<organism>
    <name type="scientific">Dictyostelium discoideum</name>
    <name type="common">Social amoeba</name>
    <dbReference type="NCBI Taxonomy" id="44689"/>
    <lineage>
        <taxon>Eukaryota</taxon>
        <taxon>Amoebozoa</taxon>
        <taxon>Evosea</taxon>
        <taxon>Eumycetozoa</taxon>
        <taxon>Dictyostelia</taxon>
        <taxon>Dictyosteliales</taxon>
        <taxon>Dictyosteliaceae</taxon>
        <taxon>Dictyostelium</taxon>
    </lineage>
</organism>
<dbReference type="EMBL" id="AAFI02000089">
    <property type="protein sequence ID" value="EAL64058.1"/>
    <property type="molecule type" value="Genomic_DNA"/>
</dbReference>
<dbReference type="RefSeq" id="XP_637563.1">
    <property type="nucleotide sequence ID" value="XM_632471.1"/>
</dbReference>
<dbReference type="SMR" id="Q54LJ8"/>
<dbReference type="FunCoup" id="Q54LJ8">
    <property type="interactions" value="11"/>
</dbReference>
<dbReference type="STRING" id="44689.Q54LJ8"/>
<dbReference type="PaxDb" id="44689-DDB0231607"/>
<dbReference type="EnsemblProtists" id="EAL64058">
    <property type="protein sequence ID" value="EAL64058"/>
    <property type="gene ID" value="DDB_G0286605"/>
</dbReference>
<dbReference type="GeneID" id="8625702"/>
<dbReference type="KEGG" id="ddi:DDB_G0286605"/>
<dbReference type="dictyBase" id="DDB_G0286605"/>
<dbReference type="VEuPathDB" id="AmoebaDB:DDB_G0286605"/>
<dbReference type="eggNOG" id="ENOG502S10Y">
    <property type="taxonomic scope" value="Eukaryota"/>
</dbReference>
<dbReference type="HOGENOM" id="CLU_007383_8_6_1"/>
<dbReference type="InParanoid" id="Q54LJ8"/>
<dbReference type="OMA" id="HEVQQGR"/>
<dbReference type="PhylomeDB" id="Q54LJ8"/>
<dbReference type="PRO" id="PR:Q54LJ8"/>
<dbReference type="Proteomes" id="UP000002195">
    <property type="component" value="Chromosome 4"/>
</dbReference>
<dbReference type="GO" id="GO:0005634">
    <property type="term" value="C:nucleus"/>
    <property type="evidence" value="ECO:0000318"/>
    <property type="project" value="GO_Central"/>
</dbReference>
<dbReference type="CDD" id="cd05251">
    <property type="entry name" value="NmrA_like_SDR_a"/>
    <property type="match status" value="1"/>
</dbReference>
<dbReference type="Gene3D" id="3.40.50.720">
    <property type="entry name" value="NAD(P)-binding Rossmann-like Domain"/>
    <property type="match status" value="1"/>
</dbReference>
<dbReference type="Gene3D" id="3.90.25.10">
    <property type="entry name" value="UDP-galactose 4-epimerase, domain 1"/>
    <property type="match status" value="1"/>
</dbReference>
<dbReference type="InterPro" id="IPR036291">
    <property type="entry name" value="NAD(P)-bd_dom_sf"/>
</dbReference>
<dbReference type="InterPro" id="IPR008030">
    <property type="entry name" value="NmrA-like"/>
</dbReference>
<dbReference type="InterPro" id="IPR051164">
    <property type="entry name" value="NmrA-like_oxidored"/>
</dbReference>
<dbReference type="PANTHER" id="PTHR42748">
    <property type="entry name" value="NITROGEN METABOLITE REPRESSION PROTEIN NMRA FAMILY MEMBER"/>
    <property type="match status" value="1"/>
</dbReference>
<dbReference type="PANTHER" id="PTHR42748:SF7">
    <property type="entry name" value="NMRA LIKE REDOX SENSOR 1-RELATED"/>
    <property type="match status" value="1"/>
</dbReference>
<dbReference type="Pfam" id="PF05368">
    <property type="entry name" value="NmrA"/>
    <property type="match status" value="1"/>
</dbReference>
<dbReference type="SUPFAM" id="SSF51735">
    <property type="entry name" value="NAD(P)-binding Rossmann-fold domains"/>
    <property type="match status" value="1"/>
</dbReference>